<proteinExistence type="inferred from homology"/>
<dbReference type="EMBL" id="BA000026">
    <property type="protein sequence ID" value="BAC43830.1"/>
    <property type="molecule type" value="Genomic_DNA"/>
</dbReference>
<dbReference type="RefSeq" id="WP_011076866.1">
    <property type="nucleotide sequence ID" value="NC_004432.1"/>
</dbReference>
<dbReference type="SMR" id="Q8EX10"/>
<dbReference type="FunCoup" id="Q8EX10">
    <property type="interactions" value="5"/>
</dbReference>
<dbReference type="STRING" id="272633.gene:10731131"/>
<dbReference type="KEGG" id="mpe:MYPE400"/>
<dbReference type="eggNOG" id="COG3763">
    <property type="taxonomic scope" value="Bacteria"/>
</dbReference>
<dbReference type="HOGENOM" id="CLU_180108_1_0_14"/>
<dbReference type="InParanoid" id="Q8EX10"/>
<dbReference type="Proteomes" id="UP000002522">
    <property type="component" value="Chromosome"/>
</dbReference>
<dbReference type="GO" id="GO:0016020">
    <property type="term" value="C:membrane"/>
    <property type="evidence" value="ECO:0007669"/>
    <property type="project" value="UniProtKB-SubCell"/>
</dbReference>
<dbReference type="HAMAP" id="MF_00363">
    <property type="entry name" value="UPF0154"/>
    <property type="match status" value="1"/>
</dbReference>
<dbReference type="InterPro" id="IPR005359">
    <property type="entry name" value="UPF0154"/>
</dbReference>
<dbReference type="Pfam" id="PF03672">
    <property type="entry name" value="UPF0154"/>
    <property type="match status" value="1"/>
</dbReference>
<comment type="subcellular location">
    <subcellularLocation>
        <location evidence="1">Membrane</location>
        <topology evidence="1">Single-pass membrane protein</topology>
    </subcellularLocation>
</comment>
<comment type="similarity">
    <text evidence="1">Belongs to the UPF0154 family.</text>
</comment>
<evidence type="ECO:0000255" key="1">
    <source>
        <dbReference type="HAMAP-Rule" id="MF_00363"/>
    </source>
</evidence>
<protein>
    <recommendedName>
        <fullName evidence="1">UPF0154 protein MYPE400</fullName>
    </recommendedName>
</protein>
<accession>Q8EX10</accession>
<organism>
    <name type="scientific">Malacoplasma penetrans (strain HF-2)</name>
    <name type="common">Mycoplasma penetrans</name>
    <dbReference type="NCBI Taxonomy" id="272633"/>
    <lineage>
        <taxon>Bacteria</taxon>
        <taxon>Bacillati</taxon>
        <taxon>Mycoplasmatota</taxon>
        <taxon>Mycoplasmoidales</taxon>
        <taxon>Mycoplasmoidaceae</taxon>
        <taxon>Malacoplasma</taxon>
    </lineage>
</organism>
<name>Y040_MALP2</name>
<feature type="chain" id="PRO_0000214969" description="UPF0154 protein MYPE400">
    <location>
        <begin position="1"/>
        <end position="75"/>
    </location>
</feature>
<feature type="transmembrane region" description="Helical" evidence="1">
    <location>
        <begin position="5"/>
        <end position="27"/>
    </location>
</feature>
<sequence>MALAIGLCLGLGIPISLIIGAVIGYYFAGKYFKKQLKENPPITESQIRAMYQQMGRKPTEKQIKQIMATFKKNNK</sequence>
<keyword id="KW-0472">Membrane</keyword>
<keyword id="KW-1185">Reference proteome</keyword>
<keyword id="KW-0812">Transmembrane</keyword>
<keyword id="KW-1133">Transmembrane helix</keyword>
<gene>
    <name type="ordered locus">MYPE400</name>
</gene>
<reference key="1">
    <citation type="journal article" date="2002" name="Nucleic Acids Res.">
        <title>The complete genomic sequence of Mycoplasma penetrans, an intracellular bacterial pathogen in humans.</title>
        <authorList>
            <person name="Sasaki Y."/>
            <person name="Ishikawa J."/>
            <person name="Yamashita A."/>
            <person name="Oshima K."/>
            <person name="Kenri T."/>
            <person name="Furuya K."/>
            <person name="Yoshino C."/>
            <person name="Horino A."/>
            <person name="Shiba T."/>
            <person name="Sasaki T."/>
            <person name="Hattori M."/>
        </authorList>
    </citation>
    <scope>NUCLEOTIDE SEQUENCE [LARGE SCALE GENOMIC DNA]</scope>
    <source>
        <strain>HF-2</strain>
    </source>
</reference>